<organism>
    <name type="scientific">Azoarcus sp. (strain BH72)</name>
    <dbReference type="NCBI Taxonomy" id="418699"/>
    <lineage>
        <taxon>Bacteria</taxon>
        <taxon>Pseudomonadati</taxon>
        <taxon>Pseudomonadota</taxon>
        <taxon>Betaproteobacteria</taxon>
        <taxon>Rhodocyclales</taxon>
        <taxon>Zoogloeaceae</taxon>
        <taxon>Azoarcus</taxon>
    </lineage>
</organism>
<feature type="chain" id="PRO_1000046640" description="UPF0301 protein azo3459">
    <location>
        <begin position="1"/>
        <end position="188"/>
    </location>
</feature>
<protein>
    <recommendedName>
        <fullName evidence="1">UPF0301 protein azo3459</fullName>
    </recommendedName>
</protein>
<evidence type="ECO:0000255" key="1">
    <source>
        <dbReference type="HAMAP-Rule" id="MF_00758"/>
    </source>
</evidence>
<sequence length="188" mass="20403">MDTGSANLTHHFLIAMPNMADPHFARTLTYIAEHSDQGALGLIINRPLDMTLETLFERVELPLEADGFAGQPVYFGGPVQTDRGFVLHRPAGDWHSTLRVNDDIALTSSRDILQSIGSSGEPQEVLISLGYAGWTAGQLEDELAQNAWLTVPADLGIIFDLPPEERLVAAMQKLGVDFAKLSEVAGHA</sequence>
<gene>
    <name type="ordered locus">azo3459</name>
</gene>
<proteinExistence type="inferred from homology"/>
<comment type="similarity">
    <text evidence="1">Belongs to the UPF0301 (AlgH) family.</text>
</comment>
<dbReference type="EMBL" id="AM406670">
    <property type="protein sequence ID" value="CAL96075.1"/>
    <property type="molecule type" value="Genomic_DNA"/>
</dbReference>
<dbReference type="RefSeq" id="WP_011767181.1">
    <property type="nucleotide sequence ID" value="NC_008702.1"/>
</dbReference>
<dbReference type="SMR" id="A1KB69"/>
<dbReference type="STRING" id="62928.azo3459"/>
<dbReference type="KEGG" id="aoa:dqs_3602"/>
<dbReference type="KEGG" id="azo:azo3459"/>
<dbReference type="eggNOG" id="COG1678">
    <property type="taxonomic scope" value="Bacteria"/>
</dbReference>
<dbReference type="HOGENOM" id="CLU_057596_1_0_4"/>
<dbReference type="OrthoDB" id="9807486at2"/>
<dbReference type="Proteomes" id="UP000002588">
    <property type="component" value="Chromosome"/>
</dbReference>
<dbReference type="GO" id="GO:0005829">
    <property type="term" value="C:cytosol"/>
    <property type="evidence" value="ECO:0007669"/>
    <property type="project" value="TreeGrafter"/>
</dbReference>
<dbReference type="Gene3D" id="3.40.1740.10">
    <property type="entry name" value="VC0467-like"/>
    <property type="match status" value="1"/>
</dbReference>
<dbReference type="HAMAP" id="MF_00758">
    <property type="entry name" value="UPF0301"/>
    <property type="match status" value="1"/>
</dbReference>
<dbReference type="InterPro" id="IPR003774">
    <property type="entry name" value="AlgH-like"/>
</dbReference>
<dbReference type="NCBIfam" id="NF001266">
    <property type="entry name" value="PRK00228.1-1"/>
    <property type="match status" value="1"/>
</dbReference>
<dbReference type="PANTHER" id="PTHR30327">
    <property type="entry name" value="UNCHARACTERIZED PROTEIN YQGE"/>
    <property type="match status" value="1"/>
</dbReference>
<dbReference type="PANTHER" id="PTHR30327:SF1">
    <property type="entry name" value="UPF0301 PROTEIN YQGE"/>
    <property type="match status" value="1"/>
</dbReference>
<dbReference type="Pfam" id="PF02622">
    <property type="entry name" value="DUF179"/>
    <property type="match status" value="1"/>
</dbReference>
<dbReference type="SUPFAM" id="SSF143456">
    <property type="entry name" value="VC0467-like"/>
    <property type="match status" value="1"/>
</dbReference>
<reference key="1">
    <citation type="journal article" date="2006" name="Nat. Biotechnol.">
        <title>Complete genome of the mutualistic, N2-fixing grass endophyte Azoarcus sp. strain BH72.</title>
        <authorList>
            <person name="Krause A."/>
            <person name="Ramakumar A."/>
            <person name="Bartels D."/>
            <person name="Battistoni F."/>
            <person name="Bekel T."/>
            <person name="Boch J."/>
            <person name="Boehm M."/>
            <person name="Friedrich F."/>
            <person name="Hurek T."/>
            <person name="Krause L."/>
            <person name="Linke B."/>
            <person name="McHardy A.C."/>
            <person name="Sarkar A."/>
            <person name="Schneiker S."/>
            <person name="Syed A.A."/>
            <person name="Thauer R."/>
            <person name="Vorhoelter F.-J."/>
            <person name="Weidner S."/>
            <person name="Puehler A."/>
            <person name="Reinhold-Hurek B."/>
            <person name="Kaiser O."/>
            <person name="Goesmann A."/>
        </authorList>
    </citation>
    <scope>NUCLEOTIDE SEQUENCE [LARGE SCALE GENOMIC DNA]</scope>
    <source>
        <strain>BH72</strain>
    </source>
</reference>
<accession>A1KB69</accession>
<name>Y3459_AZOSB</name>
<keyword id="KW-1185">Reference proteome</keyword>